<accession>Q949U4</accession>
<accession>Q9SFW3</accession>
<accession>Q9SGQ7</accession>
<protein>
    <recommendedName>
        <fullName evidence="5">O-fucosyltransferase 16</fullName>
        <shortName evidence="5">O-FucT-16</shortName>
        <ecNumber evidence="5">2.4.1.-</ecNumber>
    </recommendedName>
    <alternativeName>
        <fullName evidence="5">O-fucosyltransferase family protein</fullName>
    </alternativeName>
</protein>
<name>OFT16_ARATH</name>
<proteinExistence type="evidence at transcript level"/>
<gene>
    <name evidence="5" type="primary">OFUT16</name>
    <name evidence="6" type="ordered locus">At1g76270</name>
    <name evidence="7" type="ORF">F15M4.23</name>
    <name evidence="8" type="ORF">T23E18.20</name>
</gene>
<comment type="pathway">
    <text evidence="5">Glycan metabolism.</text>
</comment>
<comment type="subcellular location">
    <subcellularLocation>
        <location evidence="2">Membrane</location>
        <topology evidence="5">Single-pass type II membrane protein</topology>
    </subcellularLocation>
</comment>
<comment type="similarity">
    <text evidence="5">Belongs to the glycosyltransferase GT106 family.</text>
</comment>
<comment type="sequence caution" evidence="5">
    <conflict type="erroneous gene model prediction">
        <sequence resource="EMBL-CDS" id="AAF16673"/>
    </conflict>
</comment>
<comment type="sequence caution" evidence="5">
    <conflict type="erroneous gene model prediction">
        <sequence resource="EMBL-CDS" id="AAF17638"/>
    </conflict>
</comment>
<feature type="chain" id="PRO_0000442078" description="O-fucosyltransferase 16">
    <location>
        <begin position="1"/>
        <end position="572"/>
    </location>
</feature>
<feature type="transmembrane region" description="Helical; Signal-anchor for type II membrane protein" evidence="5">
    <location>
        <begin position="17"/>
        <end position="37"/>
    </location>
</feature>
<feature type="region of interest" description="Disordered" evidence="4">
    <location>
        <begin position="498"/>
        <end position="572"/>
    </location>
</feature>
<feature type="compositionally biased region" description="Acidic residues" evidence="4">
    <location>
        <begin position="521"/>
        <end position="541"/>
    </location>
</feature>
<feature type="compositionally biased region" description="Acidic residues" evidence="4">
    <location>
        <begin position="554"/>
        <end position="566"/>
    </location>
</feature>
<feature type="binding site" evidence="1">
    <location>
        <begin position="274"/>
        <end position="276"/>
    </location>
    <ligand>
        <name>substrate</name>
    </ligand>
</feature>
<feature type="glycosylation site" description="N-linked (GlcNAc...) asparagine" evidence="3">
    <location>
        <position position="92"/>
    </location>
</feature>
<feature type="glycosylation site" description="N-linked (GlcNAc...) asparagine" evidence="3">
    <location>
        <position position="136"/>
    </location>
</feature>
<feature type="glycosylation site" description="N-linked (GlcNAc...) asparagine" evidence="3">
    <location>
        <position position="446"/>
    </location>
</feature>
<feature type="glycosylation site" description="N-linked (GlcNAc...) asparagine" evidence="3">
    <location>
        <position position="506"/>
    </location>
</feature>
<feature type="glycosylation site" description="N-linked (GlcNAc...) asparagine" evidence="3">
    <location>
        <position position="549"/>
    </location>
</feature>
<dbReference type="EC" id="2.4.1.-" evidence="5"/>
<dbReference type="EMBL" id="AC009978">
    <property type="protein sequence ID" value="AAF17638.1"/>
    <property type="status" value="ALT_SEQ"/>
    <property type="molecule type" value="Genomic_DNA"/>
</dbReference>
<dbReference type="EMBL" id="AC012394">
    <property type="protein sequence ID" value="AAF16673.1"/>
    <property type="status" value="ALT_SEQ"/>
    <property type="molecule type" value="Genomic_DNA"/>
</dbReference>
<dbReference type="EMBL" id="CP002684">
    <property type="protein sequence ID" value="AEE35817.1"/>
    <property type="molecule type" value="Genomic_DNA"/>
</dbReference>
<dbReference type="EMBL" id="AY050886">
    <property type="protein sequence ID" value="AAK92823.1"/>
    <property type="molecule type" value="mRNA"/>
</dbReference>
<dbReference type="EMBL" id="BT000994">
    <property type="protein sequence ID" value="AAN41394.1"/>
    <property type="molecule type" value="mRNA"/>
</dbReference>
<dbReference type="PIR" id="B96790">
    <property type="entry name" value="B96790"/>
</dbReference>
<dbReference type="RefSeq" id="NP_565129.1">
    <property type="nucleotide sequence ID" value="NM_106277.4"/>
</dbReference>
<dbReference type="FunCoup" id="Q949U4">
    <property type="interactions" value="2017"/>
</dbReference>
<dbReference type="IntAct" id="Q949U4">
    <property type="interactions" value="1"/>
</dbReference>
<dbReference type="GlyCosmos" id="Q949U4">
    <property type="glycosylation" value="5 sites, No reported glycans"/>
</dbReference>
<dbReference type="GlyGen" id="Q949U4">
    <property type="glycosylation" value="5 sites"/>
</dbReference>
<dbReference type="SwissPalm" id="Q949U4"/>
<dbReference type="PaxDb" id="3702-AT1G76270.1"/>
<dbReference type="ProteomicsDB" id="238930"/>
<dbReference type="EnsemblPlants" id="AT1G76270.1">
    <property type="protein sequence ID" value="AT1G76270.1"/>
    <property type="gene ID" value="AT1G76270"/>
</dbReference>
<dbReference type="GeneID" id="843960"/>
<dbReference type="Gramene" id="AT1G76270.1">
    <property type="protein sequence ID" value="AT1G76270.1"/>
    <property type="gene ID" value="AT1G76270"/>
</dbReference>
<dbReference type="KEGG" id="ath:AT1G76270"/>
<dbReference type="Araport" id="AT1G76270"/>
<dbReference type="TAIR" id="AT1G76270"/>
<dbReference type="eggNOG" id="ENOG502QRBP">
    <property type="taxonomic scope" value="Eukaryota"/>
</dbReference>
<dbReference type="HOGENOM" id="CLU_018420_6_0_1"/>
<dbReference type="InParanoid" id="Q949U4"/>
<dbReference type="OMA" id="ENVDYEP"/>
<dbReference type="OrthoDB" id="1882547at2759"/>
<dbReference type="PhylomeDB" id="Q949U4"/>
<dbReference type="PRO" id="PR:Q949U4"/>
<dbReference type="Proteomes" id="UP000006548">
    <property type="component" value="Chromosome 1"/>
</dbReference>
<dbReference type="ExpressionAtlas" id="Q949U4">
    <property type="expression patterns" value="baseline and differential"/>
</dbReference>
<dbReference type="GO" id="GO:0005768">
    <property type="term" value="C:endosome"/>
    <property type="evidence" value="ECO:0007005"/>
    <property type="project" value="TAIR"/>
</dbReference>
<dbReference type="GO" id="GO:0005794">
    <property type="term" value="C:Golgi apparatus"/>
    <property type="evidence" value="ECO:0007005"/>
    <property type="project" value="TAIR"/>
</dbReference>
<dbReference type="GO" id="GO:0000137">
    <property type="term" value="C:Golgi cis cisterna"/>
    <property type="evidence" value="ECO:0007005"/>
    <property type="project" value="TAIR"/>
</dbReference>
<dbReference type="GO" id="GO:0016020">
    <property type="term" value="C:membrane"/>
    <property type="evidence" value="ECO:0007669"/>
    <property type="project" value="UniProtKB-SubCell"/>
</dbReference>
<dbReference type="GO" id="GO:0005802">
    <property type="term" value="C:trans-Golgi network"/>
    <property type="evidence" value="ECO:0007005"/>
    <property type="project" value="TAIR"/>
</dbReference>
<dbReference type="GO" id="GO:0016757">
    <property type="term" value="F:glycosyltransferase activity"/>
    <property type="evidence" value="ECO:0007669"/>
    <property type="project" value="UniProtKB-KW"/>
</dbReference>
<dbReference type="GO" id="GO:0006004">
    <property type="term" value="P:fucose metabolic process"/>
    <property type="evidence" value="ECO:0007669"/>
    <property type="project" value="UniProtKB-KW"/>
</dbReference>
<dbReference type="CDD" id="cd11299">
    <property type="entry name" value="O-FucT_plant"/>
    <property type="match status" value="1"/>
</dbReference>
<dbReference type="InterPro" id="IPR024709">
    <property type="entry name" value="FucosylTrfase_pln"/>
</dbReference>
<dbReference type="InterPro" id="IPR019378">
    <property type="entry name" value="GDP-Fuc_O-FucTrfase"/>
</dbReference>
<dbReference type="PANTHER" id="PTHR31818">
    <property type="entry name" value="O-FUCOSYLTRANSFERASE 16"/>
    <property type="match status" value="1"/>
</dbReference>
<dbReference type="PANTHER" id="PTHR31818:SF1">
    <property type="entry name" value="O-FUCOSYLTRANSFERASE 16"/>
    <property type="match status" value="1"/>
</dbReference>
<dbReference type="Pfam" id="PF10250">
    <property type="entry name" value="O-FucT"/>
    <property type="match status" value="1"/>
</dbReference>
<dbReference type="PIRSF" id="PIRSF009360">
    <property type="entry name" value="UCP009360"/>
    <property type="match status" value="1"/>
</dbReference>
<organism>
    <name type="scientific">Arabidopsis thaliana</name>
    <name type="common">Mouse-ear cress</name>
    <dbReference type="NCBI Taxonomy" id="3702"/>
    <lineage>
        <taxon>Eukaryota</taxon>
        <taxon>Viridiplantae</taxon>
        <taxon>Streptophyta</taxon>
        <taxon>Embryophyta</taxon>
        <taxon>Tracheophyta</taxon>
        <taxon>Spermatophyta</taxon>
        <taxon>Magnoliopsida</taxon>
        <taxon>eudicotyledons</taxon>
        <taxon>Gunneridae</taxon>
        <taxon>Pentapetalae</taxon>
        <taxon>rosids</taxon>
        <taxon>malvids</taxon>
        <taxon>Brassicales</taxon>
        <taxon>Brassicaceae</taxon>
        <taxon>Camelineae</taxon>
        <taxon>Arabidopsis</taxon>
    </lineage>
</organism>
<evidence type="ECO:0000250" key="1">
    <source>
        <dbReference type="UniProtKB" id="Q9H488"/>
    </source>
</evidence>
<evidence type="ECO:0000255" key="2"/>
<evidence type="ECO:0000255" key="3">
    <source>
        <dbReference type="PROSITE-ProRule" id="PRU00498"/>
    </source>
</evidence>
<evidence type="ECO:0000256" key="4">
    <source>
        <dbReference type="SAM" id="MobiDB-lite"/>
    </source>
</evidence>
<evidence type="ECO:0000305" key="5"/>
<evidence type="ECO:0000312" key="6">
    <source>
        <dbReference type="Araport" id="AT1G76270"/>
    </source>
</evidence>
<evidence type="ECO:0000312" key="7">
    <source>
        <dbReference type="EMBL" id="AAF16673.1"/>
    </source>
</evidence>
<evidence type="ECO:0000312" key="8">
    <source>
        <dbReference type="EMBL" id="AAF17638.1"/>
    </source>
</evidence>
<reference key="1">
    <citation type="journal article" date="2000" name="Nature">
        <title>Sequence and analysis of chromosome 1 of the plant Arabidopsis thaliana.</title>
        <authorList>
            <person name="Theologis A."/>
            <person name="Ecker J.R."/>
            <person name="Palm C.J."/>
            <person name="Federspiel N.A."/>
            <person name="Kaul S."/>
            <person name="White O."/>
            <person name="Alonso J."/>
            <person name="Altafi H."/>
            <person name="Araujo R."/>
            <person name="Bowman C.L."/>
            <person name="Brooks S.Y."/>
            <person name="Buehler E."/>
            <person name="Chan A."/>
            <person name="Chao Q."/>
            <person name="Chen H."/>
            <person name="Cheuk R.F."/>
            <person name="Chin C.W."/>
            <person name="Chung M.K."/>
            <person name="Conn L."/>
            <person name="Conway A.B."/>
            <person name="Conway A.R."/>
            <person name="Creasy T.H."/>
            <person name="Dewar K."/>
            <person name="Dunn P."/>
            <person name="Etgu P."/>
            <person name="Feldblyum T.V."/>
            <person name="Feng J.-D."/>
            <person name="Fong B."/>
            <person name="Fujii C.Y."/>
            <person name="Gill J.E."/>
            <person name="Goldsmith A.D."/>
            <person name="Haas B."/>
            <person name="Hansen N.F."/>
            <person name="Hughes B."/>
            <person name="Huizar L."/>
            <person name="Hunter J.L."/>
            <person name="Jenkins J."/>
            <person name="Johnson-Hopson C."/>
            <person name="Khan S."/>
            <person name="Khaykin E."/>
            <person name="Kim C.J."/>
            <person name="Koo H.L."/>
            <person name="Kremenetskaia I."/>
            <person name="Kurtz D.B."/>
            <person name="Kwan A."/>
            <person name="Lam B."/>
            <person name="Langin-Hooper S."/>
            <person name="Lee A."/>
            <person name="Lee J.M."/>
            <person name="Lenz C.A."/>
            <person name="Li J.H."/>
            <person name="Li Y.-P."/>
            <person name="Lin X."/>
            <person name="Liu S.X."/>
            <person name="Liu Z.A."/>
            <person name="Luros J.S."/>
            <person name="Maiti R."/>
            <person name="Marziali A."/>
            <person name="Militscher J."/>
            <person name="Miranda M."/>
            <person name="Nguyen M."/>
            <person name="Nierman W.C."/>
            <person name="Osborne B.I."/>
            <person name="Pai G."/>
            <person name="Peterson J."/>
            <person name="Pham P.K."/>
            <person name="Rizzo M."/>
            <person name="Rooney T."/>
            <person name="Rowley D."/>
            <person name="Sakano H."/>
            <person name="Salzberg S.L."/>
            <person name="Schwartz J.R."/>
            <person name="Shinn P."/>
            <person name="Southwick A.M."/>
            <person name="Sun H."/>
            <person name="Tallon L.J."/>
            <person name="Tambunga G."/>
            <person name="Toriumi M.J."/>
            <person name="Town C.D."/>
            <person name="Utterback T."/>
            <person name="Van Aken S."/>
            <person name="Vaysberg M."/>
            <person name="Vysotskaia V.S."/>
            <person name="Walker M."/>
            <person name="Wu D."/>
            <person name="Yu G."/>
            <person name="Fraser C.M."/>
            <person name="Venter J.C."/>
            <person name="Davis R.W."/>
        </authorList>
    </citation>
    <scope>NUCLEOTIDE SEQUENCE [LARGE SCALE GENOMIC DNA]</scope>
    <source>
        <strain>cv. Columbia</strain>
    </source>
</reference>
<reference key="2">
    <citation type="journal article" date="2017" name="Plant J.">
        <title>Araport11: a complete reannotation of the Arabidopsis thaliana reference genome.</title>
        <authorList>
            <person name="Cheng C.Y."/>
            <person name="Krishnakumar V."/>
            <person name="Chan A.P."/>
            <person name="Thibaud-Nissen F."/>
            <person name="Schobel S."/>
            <person name="Town C.D."/>
        </authorList>
    </citation>
    <scope>GENOME REANNOTATION</scope>
    <source>
        <strain>cv. Columbia</strain>
    </source>
</reference>
<reference key="3">
    <citation type="journal article" date="2003" name="Science">
        <title>Empirical analysis of transcriptional activity in the Arabidopsis genome.</title>
        <authorList>
            <person name="Yamada K."/>
            <person name="Lim J."/>
            <person name="Dale J.M."/>
            <person name="Chen H."/>
            <person name="Shinn P."/>
            <person name="Palm C.J."/>
            <person name="Southwick A.M."/>
            <person name="Wu H.C."/>
            <person name="Kim C.J."/>
            <person name="Nguyen M."/>
            <person name="Pham P.K."/>
            <person name="Cheuk R.F."/>
            <person name="Karlin-Newmann G."/>
            <person name="Liu S.X."/>
            <person name="Lam B."/>
            <person name="Sakano H."/>
            <person name="Wu T."/>
            <person name="Yu G."/>
            <person name="Miranda M."/>
            <person name="Quach H.L."/>
            <person name="Tripp M."/>
            <person name="Chang C.H."/>
            <person name="Lee J.M."/>
            <person name="Toriumi M.J."/>
            <person name="Chan M.M."/>
            <person name="Tang C.C."/>
            <person name="Onodera C.S."/>
            <person name="Deng J.M."/>
            <person name="Akiyama K."/>
            <person name="Ansari Y."/>
            <person name="Arakawa T."/>
            <person name="Banh J."/>
            <person name="Banno F."/>
            <person name="Bowser L."/>
            <person name="Brooks S.Y."/>
            <person name="Carninci P."/>
            <person name="Chao Q."/>
            <person name="Choy N."/>
            <person name="Enju A."/>
            <person name="Goldsmith A.D."/>
            <person name="Gurjal M."/>
            <person name="Hansen N.F."/>
            <person name="Hayashizaki Y."/>
            <person name="Johnson-Hopson C."/>
            <person name="Hsuan V.W."/>
            <person name="Iida K."/>
            <person name="Karnes M."/>
            <person name="Khan S."/>
            <person name="Koesema E."/>
            <person name="Ishida J."/>
            <person name="Jiang P.X."/>
            <person name="Jones T."/>
            <person name="Kawai J."/>
            <person name="Kamiya A."/>
            <person name="Meyers C."/>
            <person name="Nakajima M."/>
            <person name="Narusaka M."/>
            <person name="Seki M."/>
            <person name="Sakurai T."/>
            <person name="Satou M."/>
            <person name="Tamse R."/>
            <person name="Vaysberg M."/>
            <person name="Wallender E.K."/>
            <person name="Wong C."/>
            <person name="Yamamura Y."/>
            <person name="Yuan S."/>
            <person name="Shinozaki K."/>
            <person name="Davis R.W."/>
            <person name="Theologis A."/>
            <person name="Ecker J.R."/>
        </authorList>
    </citation>
    <scope>NUCLEOTIDE SEQUENCE [LARGE SCALE MRNA]</scope>
    <source>
        <strain>cv. Columbia</strain>
    </source>
</reference>
<reference key="4">
    <citation type="journal article" date="2012" name="Front. Plant Sci.">
        <title>Plant glycosyltransferases beyond CAZy: a perspective on DUF families.</title>
        <authorList>
            <person name="Hansen S.F."/>
            <person name="Harholt J."/>
            <person name="Oikawa A."/>
            <person name="Scheller H.V."/>
        </authorList>
    </citation>
    <scope>GENE FAMILY</scope>
    <scope>REVIEW</scope>
</reference>
<reference key="5">
    <citation type="journal article" date="2012" name="PLoS ONE">
        <title>The FRIABLE1 gene product affects cell adhesion in Arabidopsis.</title>
        <authorList>
            <person name="Neumetzler L."/>
            <person name="Humphrey T."/>
            <person name="Lumba S."/>
            <person name="Snyder S."/>
            <person name="Yeats T.H."/>
            <person name="Usadel B."/>
            <person name="Vasilevski A."/>
            <person name="Patel J."/>
            <person name="Rose J.K."/>
            <person name="Persson S."/>
            <person name="Bonetta D."/>
        </authorList>
    </citation>
    <scope>GENE FAMILY</scope>
</reference>
<reference key="6">
    <citation type="journal article" date="2012" name="PLoS ONE">
        <title>Identification of putative rhamnogalacturonan-II specific glycosyltransferases in Arabidopsis using a combination of bioinformatics approaches.</title>
        <authorList>
            <person name="Voxeur A."/>
            <person name="Andre A."/>
            <person name="Breton C."/>
            <person name="Lerouge P."/>
        </authorList>
    </citation>
    <scope>GENE FAMILY</scope>
</reference>
<reference key="7">
    <citation type="journal article" date="2013" name="Plant J.">
        <title>Identification of an additional protein involved in mannan biosynthesis.</title>
        <authorList>
            <person name="Wang Y."/>
            <person name="Mortimer J.C."/>
            <person name="Davis J."/>
            <person name="Dupree P."/>
            <person name="Keegstra K."/>
        </authorList>
    </citation>
    <scope>GENE FAMILY</scope>
</reference>
<reference key="8">
    <citation type="journal article" date="2014" name="Plant J.">
        <title>The plant glycosyltransferase clone collection for functional genomics.</title>
        <authorList>
            <person name="Lao J."/>
            <person name="Oikawa A."/>
            <person name="Bromley J.R."/>
            <person name="McInerney P."/>
            <person name="Suttangkakul A."/>
            <person name="Smith-Moritz A.M."/>
            <person name="Plahar H."/>
            <person name="Chiu T.-Y."/>
            <person name="Gonzalez Fernandez-Nino S.M.G."/>
            <person name="Ebert B."/>
            <person name="Yang F."/>
            <person name="Christiansen K.M."/>
            <person name="Hansen S.F."/>
            <person name="Stonebloom S."/>
            <person name="Adams P.D."/>
            <person name="Ronald P.C."/>
            <person name="Hillson N.J."/>
            <person name="Hadi M.Z."/>
            <person name="Vega-Sanchez M.E."/>
            <person name="Loque D."/>
            <person name="Scheller H.V."/>
            <person name="Heazlewood J.L."/>
        </authorList>
    </citation>
    <scope>WEB RESOURCE</scope>
</reference>
<sequence>MNFHRRRYPYYNRLRRLLPLVIAVSLSLLILFAFLSFLAPPPGDSDRLPPRVRYSSNDAIKATGFHIPRAGGRSDRDIWRSRNAEFFFGCSNASSKFANSKAVTRNDRYLVIATSGGLNQQRTGIVDAVVAARILNATLVVPKLDQKSYWKDASDFSHIFDVDWFISFLSGDVRIIKQLPLKGGRTWSTSRMRVPRKCNERCYINRVLPVLLKRHAVQLNKFDYRLSNKLSDDLQKLRCRVNYHALKFTDPILTMGNELVRRMRLRSKHFIALHLRYEPDMLAFSGCYYGGGDKERRELAAIRRRWKTLHINNPEKQRRQGRCPLTPEEVGLMLRALGYGSDVHIYVASGEVYGGEESLAPLKALFPHFYSKDTIATKEELEPFSSYSSRMAALDFLVCDESDVFVTNNNGNMAKILAGRRRYLGHKPTVRPNAKKLYRLFMNKENTTWEEFSSKVRSFQRGFMGEPKEVRAGRGEFHENPSTCICEDTEAKAKAQLESRKLGKKNKSTNKDAAVTVTNDDQTEEDDPDWSEPDYEEEQSDLQDRGLYNGTSLDYDDPSTSDEPELEAMLSD</sequence>
<keyword id="KW-0119">Carbohydrate metabolism</keyword>
<keyword id="KW-0294">Fucose metabolism</keyword>
<keyword id="KW-0325">Glycoprotein</keyword>
<keyword id="KW-0328">Glycosyltransferase</keyword>
<keyword id="KW-0472">Membrane</keyword>
<keyword id="KW-1185">Reference proteome</keyword>
<keyword id="KW-0735">Signal-anchor</keyword>
<keyword id="KW-0808">Transferase</keyword>
<keyword id="KW-0812">Transmembrane</keyword>
<keyword id="KW-1133">Transmembrane helix</keyword>